<feature type="chain" id="PRO_1000114567" description="Glycine cleavage system H protein">
    <location>
        <begin position="1"/>
        <end position="128"/>
    </location>
</feature>
<feature type="domain" description="Lipoyl-binding" evidence="2">
    <location>
        <begin position="24"/>
        <end position="106"/>
    </location>
</feature>
<feature type="modified residue" description="N6-lipoyllysine" evidence="1">
    <location>
        <position position="65"/>
    </location>
</feature>
<reference key="1">
    <citation type="submission" date="2008-02" db="EMBL/GenBank/DDBJ databases">
        <title>Complete sequence of Yersinia pseudotuberculosis YPIII.</title>
        <authorList>
            <consortium name="US DOE Joint Genome Institute"/>
            <person name="Copeland A."/>
            <person name="Lucas S."/>
            <person name="Lapidus A."/>
            <person name="Glavina del Rio T."/>
            <person name="Dalin E."/>
            <person name="Tice H."/>
            <person name="Bruce D."/>
            <person name="Goodwin L."/>
            <person name="Pitluck S."/>
            <person name="Munk A.C."/>
            <person name="Brettin T."/>
            <person name="Detter J.C."/>
            <person name="Han C."/>
            <person name="Tapia R."/>
            <person name="Schmutz J."/>
            <person name="Larimer F."/>
            <person name="Land M."/>
            <person name="Hauser L."/>
            <person name="Challacombe J.F."/>
            <person name="Green L."/>
            <person name="Lindler L.E."/>
            <person name="Nikolich M.P."/>
            <person name="Richardson P."/>
        </authorList>
    </citation>
    <scope>NUCLEOTIDE SEQUENCE [LARGE SCALE GENOMIC DNA]</scope>
    <source>
        <strain>YPIII</strain>
    </source>
</reference>
<gene>
    <name evidence="1" type="primary">gcvH</name>
    <name type="ordered locus">YPK_0868</name>
</gene>
<accession>B1JNS7</accession>
<name>GCSH_YERPY</name>
<proteinExistence type="inferred from homology"/>
<dbReference type="EMBL" id="CP000950">
    <property type="protein sequence ID" value="ACA67169.1"/>
    <property type="molecule type" value="Genomic_DNA"/>
</dbReference>
<dbReference type="RefSeq" id="WP_002209948.1">
    <property type="nucleotide sequence ID" value="NZ_CP009792.1"/>
</dbReference>
<dbReference type="SMR" id="B1JNS7"/>
<dbReference type="GeneID" id="57973734"/>
<dbReference type="KEGG" id="ypy:YPK_0868"/>
<dbReference type="PATRIC" id="fig|502800.11.peg.1492"/>
<dbReference type="GO" id="GO:0005829">
    <property type="term" value="C:cytosol"/>
    <property type="evidence" value="ECO:0007669"/>
    <property type="project" value="TreeGrafter"/>
</dbReference>
<dbReference type="GO" id="GO:0005960">
    <property type="term" value="C:glycine cleavage complex"/>
    <property type="evidence" value="ECO:0007669"/>
    <property type="project" value="InterPro"/>
</dbReference>
<dbReference type="GO" id="GO:0019464">
    <property type="term" value="P:glycine decarboxylation via glycine cleavage system"/>
    <property type="evidence" value="ECO:0007669"/>
    <property type="project" value="UniProtKB-UniRule"/>
</dbReference>
<dbReference type="CDD" id="cd06848">
    <property type="entry name" value="GCS_H"/>
    <property type="match status" value="1"/>
</dbReference>
<dbReference type="FunFam" id="2.40.50.100:FF:000011">
    <property type="entry name" value="Glycine cleavage system H protein"/>
    <property type="match status" value="1"/>
</dbReference>
<dbReference type="Gene3D" id="2.40.50.100">
    <property type="match status" value="1"/>
</dbReference>
<dbReference type="HAMAP" id="MF_00272">
    <property type="entry name" value="GcvH"/>
    <property type="match status" value="1"/>
</dbReference>
<dbReference type="InterPro" id="IPR003016">
    <property type="entry name" value="2-oxoA_DH_lipoyl-BS"/>
</dbReference>
<dbReference type="InterPro" id="IPR000089">
    <property type="entry name" value="Biotin_lipoyl"/>
</dbReference>
<dbReference type="InterPro" id="IPR002930">
    <property type="entry name" value="GCV_H"/>
</dbReference>
<dbReference type="InterPro" id="IPR033753">
    <property type="entry name" value="GCV_H/Fam206"/>
</dbReference>
<dbReference type="InterPro" id="IPR017453">
    <property type="entry name" value="GCV_H_sub"/>
</dbReference>
<dbReference type="InterPro" id="IPR011053">
    <property type="entry name" value="Single_hybrid_motif"/>
</dbReference>
<dbReference type="NCBIfam" id="TIGR00527">
    <property type="entry name" value="gcvH"/>
    <property type="match status" value="1"/>
</dbReference>
<dbReference type="NCBIfam" id="NF002270">
    <property type="entry name" value="PRK01202.1"/>
    <property type="match status" value="1"/>
</dbReference>
<dbReference type="PANTHER" id="PTHR11715">
    <property type="entry name" value="GLYCINE CLEAVAGE SYSTEM H PROTEIN"/>
    <property type="match status" value="1"/>
</dbReference>
<dbReference type="PANTHER" id="PTHR11715:SF3">
    <property type="entry name" value="GLYCINE CLEAVAGE SYSTEM H PROTEIN-RELATED"/>
    <property type="match status" value="1"/>
</dbReference>
<dbReference type="Pfam" id="PF01597">
    <property type="entry name" value="GCV_H"/>
    <property type="match status" value="1"/>
</dbReference>
<dbReference type="SUPFAM" id="SSF51230">
    <property type="entry name" value="Single hybrid motif"/>
    <property type="match status" value="1"/>
</dbReference>
<dbReference type="PROSITE" id="PS50968">
    <property type="entry name" value="BIOTINYL_LIPOYL"/>
    <property type="match status" value="1"/>
</dbReference>
<dbReference type="PROSITE" id="PS00189">
    <property type="entry name" value="LIPOYL"/>
    <property type="match status" value="1"/>
</dbReference>
<comment type="function">
    <text evidence="1">The glycine cleavage system catalyzes the degradation of glycine. The H protein shuttles the methylamine group of glycine from the P protein to the T protein.</text>
</comment>
<comment type="cofactor">
    <cofactor evidence="1">
        <name>(R)-lipoate</name>
        <dbReference type="ChEBI" id="CHEBI:83088"/>
    </cofactor>
    <text evidence="1">Binds 1 lipoyl cofactor covalently.</text>
</comment>
<comment type="subunit">
    <text evidence="1">The glycine cleavage system is composed of four proteins: P, T, L and H.</text>
</comment>
<comment type="similarity">
    <text evidence="1">Belongs to the GcvH family.</text>
</comment>
<evidence type="ECO:0000255" key="1">
    <source>
        <dbReference type="HAMAP-Rule" id="MF_00272"/>
    </source>
</evidence>
<evidence type="ECO:0000255" key="2">
    <source>
        <dbReference type="PROSITE-ProRule" id="PRU01066"/>
    </source>
</evidence>
<keyword id="KW-0450">Lipoyl</keyword>
<sequence length="128" mass="13581">MSNVPTELKYALSHEWVRADGDGVYSVGITEHAQELLGDMVFVDLPEVGSDVSAGSDCAVAESVKAASDIYAPISGEIVAVNTELENSPELVNSAPYTDGWLFSIKAADESELDNLLDADAYLAAIEE</sequence>
<protein>
    <recommendedName>
        <fullName evidence="1">Glycine cleavage system H protein</fullName>
    </recommendedName>
</protein>
<organism>
    <name type="scientific">Yersinia pseudotuberculosis serotype O:3 (strain YPIII)</name>
    <dbReference type="NCBI Taxonomy" id="502800"/>
    <lineage>
        <taxon>Bacteria</taxon>
        <taxon>Pseudomonadati</taxon>
        <taxon>Pseudomonadota</taxon>
        <taxon>Gammaproteobacteria</taxon>
        <taxon>Enterobacterales</taxon>
        <taxon>Yersiniaceae</taxon>
        <taxon>Yersinia</taxon>
    </lineage>
</organism>